<keyword id="KW-0472">Membrane</keyword>
<keyword id="KW-0539">Nucleus</keyword>
<keyword id="KW-1185">Reference proteome</keyword>
<keyword id="KW-0687">Ribonucleoprotein</keyword>
<keyword id="KW-0690">Ribosome biogenesis</keyword>
<keyword id="KW-0698">rRNA processing</keyword>
<keyword id="KW-0812">Transmembrane</keyword>
<keyword id="KW-1133">Transmembrane helix</keyword>
<protein>
    <recommendedName>
        <fullName evidence="8">Protein NUCLEOLAR COMPLEX ASSOCIATED 4</fullName>
        <shortName evidence="8">AtNoc4</shortName>
    </recommendedName>
    <alternativeName>
        <fullName evidence="7">Protein EMBRYO DEFECTIVE 2762</fullName>
    </alternativeName>
</protein>
<feature type="chain" id="PRO_0000448723" description="Protein NUCLEOLAR COMPLEX ASSOCIATED 4">
    <location>
        <begin position="1"/>
        <end position="577"/>
    </location>
</feature>
<feature type="transmembrane region" description="Helical" evidence="3">
    <location>
        <begin position="329"/>
        <end position="349"/>
    </location>
</feature>
<feature type="transmembrane region" description="Helical" evidence="3">
    <location>
        <begin position="350"/>
        <end position="370"/>
    </location>
</feature>
<feature type="transmembrane region" description="Helical" evidence="3">
    <location>
        <begin position="404"/>
        <end position="424"/>
    </location>
</feature>
<feature type="region of interest" description="Disordered" evidence="4">
    <location>
        <begin position="230"/>
        <end position="263"/>
    </location>
</feature>
<feature type="sequence conflict" description="In Ref. 3; AAL57663." evidence="9" ref="3">
    <original>Q</original>
    <variation>R</variation>
    <location>
        <position position="347"/>
    </location>
</feature>
<comment type="function">
    <text evidence="1 5 6">Essential protein required during embryogenesis (PubMed:15266054, PubMed:23382868). Involved in nucleolar processing of ribosomal RNA (rRNA) 40S and 90S ribosomal subunits and ribosome assembly; early in ribosome biogenesis, especially required during the maturation of 5.8S rRNA (PubMed:23382868). Has a role in the nuclear export of 40S pre-ribosomal subunit to the cytoplasm (By similarity).</text>
</comment>
<comment type="subunit">
    <text evidence="1">Component of the ribosomal small subunit (SSU) processome composed of at least 40 protein subunits and snoRNA U3.</text>
</comment>
<comment type="subcellular location">
    <subcellularLocation>
        <location evidence="2">Nucleus membrane</location>
        <topology evidence="3">Multi-pass membrane protein</topology>
    </subcellularLocation>
    <subcellularLocation>
        <location evidence="6">Nucleus</location>
        <location evidence="6">Nucleolus</location>
    </subcellularLocation>
</comment>
<comment type="tissue specificity">
    <text evidence="6">Mostly expressed in flowers and stems and at lower levels in roots, hypocotyls, siliques, leaves and seeds.</text>
</comment>
<comment type="disruption phenotype">
    <text evidence="5 6">Pale seeds with arrested embryo development at the globular stage in homozygous plants (PubMed:15266054, PubMed:23382868). In heterozygous plants, slight accumulation of the 23S-like precursor P-A3 (PubMed:23382868). Altered maturation of 5.8S rRNA with an especially impaired processing at the 5' end (PubMed:23382868).</text>
</comment>
<comment type="similarity">
    <text evidence="9">Belongs to the CBF/MAK21 family.</text>
</comment>
<comment type="sequence caution" evidence="9">
    <conflict type="erroneous gene model prediction">
        <sequence resource="EMBL-CDS" id="AAM15399"/>
    </conflict>
</comment>
<comment type="online information" name="Seed defective Arabidopsis mutants">
    <link uri="http://seedgenes.org/MutantList"/>
</comment>
<name>NOC4_ARATH</name>
<organism>
    <name type="scientific">Arabidopsis thaliana</name>
    <name type="common">Mouse-ear cress</name>
    <dbReference type="NCBI Taxonomy" id="3702"/>
    <lineage>
        <taxon>Eukaryota</taxon>
        <taxon>Viridiplantae</taxon>
        <taxon>Streptophyta</taxon>
        <taxon>Embryophyta</taxon>
        <taxon>Tracheophyta</taxon>
        <taxon>Spermatophyta</taxon>
        <taxon>Magnoliopsida</taxon>
        <taxon>eudicotyledons</taxon>
        <taxon>Gunneridae</taxon>
        <taxon>Pentapetalae</taxon>
        <taxon>rosids</taxon>
        <taxon>malvids</taxon>
        <taxon>Brassicales</taxon>
        <taxon>Brassicaceae</taxon>
        <taxon>Camelineae</taxon>
        <taxon>Arabidopsis</taxon>
    </lineage>
</organism>
<reference key="1">
    <citation type="journal article" date="1999" name="Nature">
        <title>Sequence and analysis of chromosome 2 of the plant Arabidopsis thaliana.</title>
        <authorList>
            <person name="Lin X."/>
            <person name="Kaul S."/>
            <person name="Rounsley S.D."/>
            <person name="Shea T.P."/>
            <person name="Benito M.-I."/>
            <person name="Town C.D."/>
            <person name="Fujii C.Y."/>
            <person name="Mason T.M."/>
            <person name="Bowman C.L."/>
            <person name="Barnstead M.E."/>
            <person name="Feldblyum T.V."/>
            <person name="Buell C.R."/>
            <person name="Ketchum K.A."/>
            <person name="Lee J.J."/>
            <person name="Ronning C.M."/>
            <person name="Koo H.L."/>
            <person name="Moffat K.S."/>
            <person name="Cronin L.A."/>
            <person name="Shen M."/>
            <person name="Pai G."/>
            <person name="Van Aken S."/>
            <person name="Umayam L."/>
            <person name="Tallon L.J."/>
            <person name="Gill J.E."/>
            <person name="Adams M.D."/>
            <person name="Carrera A.J."/>
            <person name="Creasy T.H."/>
            <person name="Goodman H.M."/>
            <person name="Somerville C.R."/>
            <person name="Copenhaver G.P."/>
            <person name="Preuss D."/>
            <person name="Nierman W.C."/>
            <person name="White O."/>
            <person name="Eisen J.A."/>
            <person name="Salzberg S.L."/>
            <person name="Fraser C.M."/>
            <person name="Venter J.C."/>
        </authorList>
    </citation>
    <scope>NUCLEOTIDE SEQUENCE [LARGE SCALE GENOMIC DNA]</scope>
    <source>
        <strain>cv. Columbia</strain>
    </source>
</reference>
<reference key="2">
    <citation type="journal article" date="2017" name="Plant J.">
        <title>Araport11: a complete reannotation of the Arabidopsis thaliana reference genome.</title>
        <authorList>
            <person name="Cheng C.Y."/>
            <person name="Krishnakumar V."/>
            <person name="Chan A.P."/>
            <person name="Thibaud-Nissen F."/>
            <person name="Schobel S."/>
            <person name="Town C.D."/>
        </authorList>
    </citation>
    <scope>GENOME REANNOTATION</scope>
    <source>
        <strain>cv. Columbia</strain>
    </source>
</reference>
<reference key="3">
    <citation type="journal article" date="2003" name="Science">
        <title>Empirical analysis of transcriptional activity in the Arabidopsis genome.</title>
        <authorList>
            <person name="Yamada K."/>
            <person name="Lim J."/>
            <person name="Dale J.M."/>
            <person name="Chen H."/>
            <person name="Shinn P."/>
            <person name="Palm C.J."/>
            <person name="Southwick A.M."/>
            <person name="Wu H.C."/>
            <person name="Kim C.J."/>
            <person name="Nguyen M."/>
            <person name="Pham P.K."/>
            <person name="Cheuk R.F."/>
            <person name="Karlin-Newmann G."/>
            <person name="Liu S.X."/>
            <person name="Lam B."/>
            <person name="Sakano H."/>
            <person name="Wu T."/>
            <person name="Yu G."/>
            <person name="Miranda M."/>
            <person name="Quach H.L."/>
            <person name="Tripp M."/>
            <person name="Chang C.H."/>
            <person name="Lee J.M."/>
            <person name="Toriumi M.J."/>
            <person name="Chan M.M."/>
            <person name="Tang C.C."/>
            <person name="Onodera C.S."/>
            <person name="Deng J.M."/>
            <person name="Akiyama K."/>
            <person name="Ansari Y."/>
            <person name="Arakawa T."/>
            <person name="Banh J."/>
            <person name="Banno F."/>
            <person name="Bowser L."/>
            <person name="Brooks S.Y."/>
            <person name="Carninci P."/>
            <person name="Chao Q."/>
            <person name="Choy N."/>
            <person name="Enju A."/>
            <person name="Goldsmith A.D."/>
            <person name="Gurjal M."/>
            <person name="Hansen N.F."/>
            <person name="Hayashizaki Y."/>
            <person name="Johnson-Hopson C."/>
            <person name="Hsuan V.W."/>
            <person name="Iida K."/>
            <person name="Karnes M."/>
            <person name="Khan S."/>
            <person name="Koesema E."/>
            <person name="Ishida J."/>
            <person name="Jiang P.X."/>
            <person name="Jones T."/>
            <person name="Kawai J."/>
            <person name="Kamiya A."/>
            <person name="Meyers C."/>
            <person name="Nakajima M."/>
            <person name="Narusaka M."/>
            <person name="Seki M."/>
            <person name="Sakurai T."/>
            <person name="Satou M."/>
            <person name="Tamse R."/>
            <person name="Vaysberg M."/>
            <person name="Wallender E.K."/>
            <person name="Wong C."/>
            <person name="Yamamura Y."/>
            <person name="Yuan S."/>
            <person name="Shinozaki K."/>
            <person name="Davis R.W."/>
            <person name="Theologis A."/>
            <person name="Ecker J.R."/>
        </authorList>
    </citation>
    <scope>NUCLEOTIDE SEQUENCE [LARGE SCALE MRNA]</scope>
    <source>
        <strain>cv. Columbia</strain>
    </source>
</reference>
<reference key="4">
    <citation type="journal article" date="2004" name="Plant Physiol.">
        <title>Identification of genes required for embryo development in Arabidopsis.</title>
        <authorList>
            <person name="Tzafrir I."/>
            <person name="Pena-Muralla R."/>
            <person name="Dickerman A."/>
            <person name="Berg M."/>
            <person name="Rogers R."/>
            <person name="Hutchens S."/>
            <person name="Sweeney T.C."/>
            <person name="McElver J."/>
            <person name="Aux G."/>
            <person name="Patton D."/>
            <person name="Meinke D."/>
        </authorList>
    </citation>
    <scope>FUNCTION [LARGE SCALE ANALYSIS]</scope>
    <scope>DISRUPTION PHENOTYPE [LARGE SCALE ANALYSIS]</scope>
    <source>
        <strain>cv. Columbia</strain>
    </source>
</reference>
<reference key="5">
    <citation type="journal article" date="2013" name="PLoS ONE">
        <title>40S ribosome biogenesis co-factors are essential for gametophyte and embryo development.</title>
        <authorList>
            <person name="Missbach S."/>
            <person name="Weis B.L."/>
            <person name="Martin R."/>
            <person name="Simm S."/>
            <person name="Bohnsack M.T."/>
            <person name="Schleiff E."/>
        </authorList>
    </citation>
    <scope>FUNCTION</scope>
    <scope>DISRUPTION PHENOTYPE</scope>
    <scope>TISSUE SPECIFICITY</scope>
    <scope>SUBCELLULAR LOCATION</scope>
    <source>
        <strain>cv. Columbia</strain>
    </source>
</reference>
<sequence>MASILSKKQKKNEKYTLKELKSLGHDLLTSRSHINNLPLLLTFVSPESPPQFVVESLLSLQSFFTPLLSQLPPTSSSPSSTKTEDPEVVFKAWLRSKFDEFVKLLLDVLVSQQSEDSLRGIVLGTLMEFVKLLNAGRFHSSIYHRLLDAIIHSEVDIEIFLDILTSKYFKYIDVRYFTYISMEKFVKTLEASVSADRTVIENNEAESDSKESLELSVRKIYQVLSQIPPPEKQAEKSQHEMWSGSDESISEKPTDKKKKTEKGDSTLLSPATISKRMKLKFTKAWISFLRLPLPIDVYKEVLASIHLTVIPHLSNPTMLCDFLTKSYDIGGVVSVMALSSLFILMTQHGLEYPFFYEKLYALLVPSVFVAKHRAKFLQLLDACLKSSMLPAYLAASFTKKLSRLSLSIPPAGSLVITALIYNLLRRNPTINHLVQEIVENADEANTEAGEHNESQPKTIKKRKLGIDYFNNQESDPKKSGALKSSLWEIDTLRHHYCPPVSRFISSLETNLTIRSKTTEMKIEDFCSGSYATIFGDEIRRRVKQVPLAFYKTVPTSLFADSDFPGWTFTIPQEEGTC</sequence>
<gene>
    <name evidence="8" type="primary">NOC4</name>
    <name evidence="7" type="synonym">EMB2762</name>
    <name evidence="10" type="ordered locus">At2g17250</name>
    <name evidence="11" type="ORF">T23A1.11</name>
</gene>
<proteinExistence type="evidence at transcript level"/>
<accession>F4IMH3</accession>
<accession>O22737</accession>
<accession>Q8VZE1</accession>
<dbReference type="EMBL" id="AC007127">
    <property type="protein sequence ID" value="AAM15399.1"/>
    <property type="status" value="ALT_SEQ"/>
    <property type="molecule type" value="Genomic_DNA"/>
</dbReference>
<dbReference type="EMBL" id="CP002685">
    <property type="protein sequence ID" value="AEC06603.1"/>
    <property type="molecule type" value="Genomic_DNA"/>
</dbReference>
<dbReference type="EMBL" id="AY065021">
    <property type="protein sequence ID" value="AAL57663.1"/>
    <property type="molecule type" value="mRNA"/>
</dbReference>
<dbReference type="PIR" id="H84549">
    <property type="entry name" value="H84549"/>
</dbReference>
<dbReference type="RefSeq" id="NP_179316.2">
    <property type="nucleotide sequence ID" value="NM_127279.3"/>
</dbReference>
<dbReference type="SMR" id="F4IMH3"/>
<dbReference type="FunCoup" id="F4IMH3">
    <property type="interactions" value="2510"/>
</dbReference>
<dbReference type="STRING" id="3702.F4IMH3"/>
<dbReference type="iPTMnet" id="F4IMH3"/>
<dbReference type="PaxDb" id="3702-AT2G17250.1"/>
<dbReference type="ProteomicsDB" id="212585"/>
<dbReference type="EnsemblPlants" id="AT2G17250.1">
    <property type="protein sequence ID" value="AT2G17250.1"/>
    <property type="gene ID" value="AT2G17250"/>
</dbReference>
<dbReference type="GeneID" id="816230"/>
<dbReference type="Gramene" id="AT2G17250.1">
    <property type="protein sequence ID" value="AT2G17250.1"/>
    <property type="gene ID" value="AT2G17250"/>
</dbReference>
<dbReference type="KEGG" id="ath:AT2G17250"/>
<dbReference type="Araport" id="AT2G17250"/>
<dbReference type="TAIR" id="AT2G17250">
    <property type="gene designation" value="EMB2762"/>
</dbReference>
<dbReference type="eggNOG" id="KOG2154">
    <property type="taxonomic scope" value="Eukaryota"/>
</dbReference>
<dbReference type="HOGENOM" id="CLU_015945_1_0_1"/>
<dbReference type="InParanoid" id="F4IMH3"/>
<dbReference type="OMA" id="TDAYNSH"/>
<dbReference type="CD-CODE" id="4299E36E">
    <property type="entry name" value="Nucleolus"/>
</dbReference>
<dbReference type="PRO" id="PR:F4IMH3"/>
<dbReference type="Proteomes" id="UP000006548">
    <property type="component" value="Chromosome 2"/>
</dbReference>
<dbReference type="ExpressionAtlas" id="F4IMH3">
    <property type="expression patterns" value="baseline and differential"/>
</dbReference>
<dbReference type="GO" id="GO:0031965">
    <property type="term" value="C:nuclear membrane"/>
    <property type="evidence" value="ECO:0007669"/>
    <property type="project" value="UniProtKB-SubCell"/>
</dbReference>
<dbReference type="GO" id="GO:0005730">
    <property type="term" value="C:nucleolus"/>
    <property type="evidence" value="ECO:0000314"/>
    <property type="project" value="TAIR"/>
</dbReference>
<dbReference type="GO" id="GO:0005654">
    <property type="term" value="C:nucleoplasm"/>
    <property type="evidence" value="ECO:0000314"/>
    <property type="project" value="TAIR"/>
</dbReference>
<dbReference type="GO" id="GO:1990904">
    <property type="term" value="C:ribonucleoprotein complex"/>
    <property type="evidence" value="ECO:0007669"/>
    <property type="project" value="UniProtKB-KW"/>
</dbReference>
<dbReference type="GO" id="GO:0009793">
    <property type="term" value="P:embryo development ending in seed dormancy"/>
    <property type="evidence" value="ECO:0000315"/>
    <property type="project" value="TAIR"/>
</dbReference>
<dbReference type="GO" id="GO:0006364">
    <property type="term" value="P:rRNA processing"/>
    <property type="evidence" value="ECO:0000315"/>
    <property type="project" value="TAIR"/>
</dbReference>
<dbReference type="InterPro" id="IPR005612">
    <property type="entry name" value="CCAAT-binding_factor"/>
</dbReference>
<dbReference type="InterPro" id="IPR027193">
    <property type="entry name" value="Noc4"/>
</dbReference>
<dbReference type="PANTHER" id="PTHR12455">
    <property type="entry name" value="NUCLEOLAR COMPLEX PROTEIN 4"/>
    <property type="match status" value="1"/>
</dbReference>
<dbReference type="PANTHER" id="PTHR12455:SF0">
    <property type="entry name" value="NUCLEOLAR COMPLEX PROTEIN 4 HOMOLOG"/>
    <property type="match status" value="1"/>
</dbReference>
<dbReference type="Pfam" id="PF03914">
    <property type="entry name" value="CBF"/>
    <property type="match status" value="1"/>
</dbReference>
<evidence type="ECO:0000250" key="1">
    <source>
        <dbReference type="UniProtKB" id="Q06512"/>
    </source>
</evidence>
<evidence type="ECO:0000250" key="2">
    <source>
        <dbReference type="UniProtKB" id="Q9BVI4"/>
    </source>
</evidence>
<evidence type="ECO:0000255" key="3"/>
<evidence type="ECO:0000256" key="4">
    <source>
        <dbReference type="SAM" id="MobiDB-lite"/>
    </source>
</evidence>
<evidence type="ECO:0000269" key="5">
    <source>
    </source>
</evidence>
<evidence type="ECO:0000269" key="6">
    <source>
    </source>
</evidence>
<evidence type="ECO:0000303" key="7">
    <source>
    </source>
</evidence>
<evidence type="ECO:0000303" key="8">
    <source>
    </source>
</evidence>
<evidence type="ECO:0000305" key="9"/>
<evidence type="ECO:0000312" key="10">
    <source>
        <dbReference type="Araport" id="AT2G17250"/>
    </source>
</evidence>
<evidence type="ECO:0000312" key="11">
    <source>
        <dbReference type="EMBL" id="AAM15399.1"/>
    </source>
</evidence>